<keyword id="KW-0067">ATP-binding</keyword>
<keyword id="KW-0963">Cytoplasm</keyword>
<keyword id="KW-1015">Disulfide bond</keyword>
<keyword id="KW-0547">Nucleotide-binding</keyword>
<keyword id="KW-0694">RNA-binding</keyword>
<keyword id="KW-0808">Transferase</keyword>
<keyword id="KW-0819">tRNA processing</keyword>
<keyword id="KW-0820">tRNA-binding</keyword>
<reference key="1">
    <citation type="journal article" date="1999" name="Nat. Genet.">
        <title>Comparative genomes of Chlamydia pneumoniae and C. trachomatis.</title>
        <authorList>
            <person name="Kalman S."/>
            <person name="Mitchell W.P."/>
            <person name="Marathe R."/>
            <person name="Lammel C.J."/>
            <person name="Fan J."/>
            <person name="Hyman R.W."/>
            <person name="Olinger L."/>
            <person name="Grimwood J."/>
            <person name="Davis R.W."/>
            <person name="Stephens R.S."/>
        </authorList>
    </citation>
    <scope>NUCLEOTIDE SEQUENCE [LARGE SCALE GENOMIC DNA]</scope>
    <source>
        <strain>CWL029</strain>
    </source>
</reference>
<reference key="2">
    <citation type="journal article" date="2000" name="Nucleic Acids Res.">
        <title>Genome sequences of Chlamydia trachomatis MoPn and Chlamydia pneumoniae AR39.</title>
        <authorList>
            <person name="Read T.D."/>
            <person name="Brunham R.C."/>
            <person name="Shen C."/>
            <person name="Gill S.R."/>
            <person name="Heidelberg J.F."/>
            <person name="White O."/>
            <person name="Hickey E.K."/>
            <person name="Peterson J.D."/>
            <person name="Utterback T.R."/>
            <person name="Berry K.J."/>
            <person name="Bass S."/>
            <person name="Linher K.D."/>
            <person name="Weidman J.F."/>
            <person name="Khouri H.M."/>
            <person name="Craven B."/>
            <person name="Bowman C."/>
            <person name="Dodson R.J."/>
            <person name="Gwinn M.L."/>
            <person name="Nelson W.C."/>
            <person name="DeBoy R.T."/>
            <person name="Kolonay J.F."/>
            <person name="McClarty G."/>
            <person name="Salzberg S.L."/>
            <person name="Eisen J.A."/>
            <person name="Fraser C.M."/>
        </authorList>
    </citation>
    <scope>NUCLEOTIDE SEQUENCE [LARGE SCALE GENOMIC DNA]</scope>
    <source>
        <strain>AR39</strain>
    </source>
</reference>
<reference key="3">
    <citation type="journal article" date="2000" name="Nucleic Acids Res.">
        <title>Comparison of whole genome sequences of Chlamydia pneumoniae J138 from Japan and CWL029 from USA.</title>
        <authorList>
            <person name="Shirai M."/>
            <person name="Hirakawa H."/>
            <person name="Kimoto M."/>
            <person name="Tabuchi M."/>
            <person name="Kishi F."/>
            <person name="Ouchi K."/>
            <person name="Shiba T."/>
            <person name="Ishii K."/>
            <person name="Hattori M."/>
            <person name="Kuhara S."/>
            <person name="Nakazawa T."/>
        </authorList>
    </citation>
    <scope>NUCLEOTIDE SEQUENCE [LARGE SCALE GENOMIC DNA]</scope>
    <source>
        <strain>J138</strain>
    </source>
</reference>
<reference key="4">
    <citation type="submission" date="2002-05" db="EMBL/GenBank/DDBJ databases">
        <title>The genome sequence of Chlamydia pneumoniae TW183 and comparison with other Chlamydia strains based on whole genome sequence analysis.</title>
        <authorList>
            <person name="Geng M.M."/>
            <person name="Schuhmacher A."/>
            <person name="Muehldorfer I."/>
            <person name="Bensch K.W."/>
            <person name="Schaefer K.P."/>
            <person name="Schneider S."/>
            <person name="Pohl T."/>
            <person name="Essig A."/>
            <person name="Marre R."/>
            <person name="Melchers K."/>
        </authorList>
    </citation>
    <scope>NUCLEOTIDE SEQUENCE [LARGE SCALE GENOMIC DNA]</scope>
    <source>
        <strain>TW-183</strain>
    </source>
</reference>
<organism>
    <name type="scientific">Chlamydia pneumoniae</name>
    <name type="common">Chlamydophila pneumoniae</name>
    <dbReference type="NCBI Taxonomy" id="83558"/>
    <lineage>
        <taxon>Bacteria</taxon>
        <taxon>Pseudomonadati</taxon>
        <taxon>Chlamydiota</taxon>
        <taxon>Chlamydiia</taxon>
        <taxon>Chlamydiales</taxon>
        <taxon>Chlamydiaceae</taxon>
        <taxon>Chlamydia/Chlamydophila group</taxon>
        <taxon>Chlamydia</taxon>
    </lineage>
</organism>
<dbReference type="EC" id="2.8.1.13" evidence="1"/>
<dbReference type="EMBL" id="AE001363">
    <property type="protein sequence ID" value="AAD18582.1"/>
    <property type="molecule type" value="Genomic_DNA"/>
</dbReference>
<dbReference type="EMBL" id="AE002161">
    <property type="protein sequence ID" value="AAF38171.1"/>
    <property type="molecule type" value="Genomic_DNA"/>
</dbReference>
<dbReference type="EMBL" id="BA000008">
    <property type="protein sequence ID" value="BAA98646.1"/>
    <property type="molecule type" value="Genomic_DNA"/>
</dbReference>
<dbReference type="EMBL" id="AE009440">
    <property type="protein sequence ID" value="AAP98385.1"/>
    <property type="molecule type" value="Genomic_DNA"/>
</dbReference>
<dbReference type="PIR" id="D86545">
    <property type="entry name" value="D86545"/>
</dbReference>
<dbReference type="PIR" id="H72079">
    <property type="entry name" value="H72079"/>
</dbReference>
<dbReference type="RefSeq" id="NP_224638.1">
    <property type="nucleotide sequence ID" value="NC_000922.1"/>
</dbReference>
<dbReference type="SMR" id="Q9Z8A5"/>
<dbReference type="STRING" id="406984.CPK_ORF00949"/>
<dbReference type="KEGG" id="cpa:CP_0315"/>
<dbReference type="KEGG" id="cpj:ycbF"/>
<dbReference type="KEGG" id="cpn:CPn_0438"/>
<dbReference type="KEGG" id="cpt:CpB0453"/>
<dbReference type="PATRIC" id="fig|115713.3.peg.485"/>
<dbReference type="eggNOG" id="COG0482">
    <property type="taxonomic scope" value="Bacteria"/>
</dbReference>
<dbReference type="HOGENOM" id="CLU_035188_1_0_0"/>
<dbReference type="Proteomes" id="UP000000583">
    <property type="component" value="Chromosome"/>
</dbReference>
<dbReference type="Proteomes" id="UP000000801">
    <property type="component" value="Chromosome"/>
</dbReference>
<dbReference type="GO" id="GO:0005737">
    <property type="term" value="C:cytoplasm"/>
    <property type="evidence" value="ECO:0007669"/>
    <property type="project" value="UniProtKB-SubCell"/>
</dbReference>
<dbReference type="GO" id="GO:0005524">
    <property type="term" value="F:ATP binding"/>
    <property type="evidence" value="ECO:0007669"/>
    <property type="project" value="UniProtKB-KW"/>
</dbReference>
<dbReference type="GO" id="GO:0000049">
    <property type="term" value="F:tRNA binding"/>
    <property type="evidence" value="ECO:0007669"/>
    <property type="project" value="UniProtKB-KW"/>
</dbReference>
<dbReference type="GO" id="GO:0103016">
    <property type="term" value="F:tRNA-uridine 2-sulfurtransferase activity"/>
    <property type="evidence" value="ECO:0007669"/>
    <property type="project" value="UniProtKB-EC"/>
</dbReference>
<dbReference type="GO" id="GO:0002143">
    <property type="term" value="P:tRNA wobble position uridine thiolation"/>
    <property type="evidence" value="ECO:0007669"/>
    <property type="project" value="TreeGrafter"/>
</dbReference>
<dbReference type="CDD" id="cd01998">
    <property type="entry name" value="MnmA_TRMU-like"/>
    <property type="match status" value="1"/>
</dbReference>
<dbReference type="FunFam" id="2.30.30.280:FF:000001">
    <property type="entry name" value="tRNA-specific 2-thiouridylase MnmA"/>
    <property type="match status" value="1"/>
</dbReference>
<dbReference type="FunFam" id="2.40.30.10:FF:000023">
    <property type="entry name" value="tRNA-specific 2-thiouridylase MnmA"/>
    <property type="match status" value="1"/>
</dbReference>
<dbReference type="FunFam" id="3.40.50.620:FF:000115">
    <property type="entry name" value="tRNA-specific 2-thiouridylase MnmA"/>
    <property type="match status" value="1"/>
</dbReference>
<dbReference type="Gene3D" id="2.30.30.280">
    <property type="entry name" value="Adenine nucleotide alpha hydrolases-like domains"/>
    <property type="match status" value="1"/>
</dbReference>
<dbReference type="Gene3D" id="3.40.50.620">
    <property type="entry name" value="HUPs"/>
    <property type="match status" value="1"/>
</dbReference>
<dbReference type="Gene3D" id="2.40.30.10">
    <property type="entry name" value="Translation factors"/>
    <property type="match status" value="1"/>
</dbReference>
<dbReference type="HAMAP" id="MF_00144">
    <property type="entry name" value="tRNA_thiouridyl_MnmA"/>
    <property type="match status" value="1"/>
</dbReference>
<dbReference type="InterPro" id="IPR004506">
    <property type="entry name" value="MnmA-like"/>
</dbReference>
<dbReference type="InterPro" id="IPR046885">
    <property type="entry name" value="MnmA-like_C"/>
</dbReference>
<dbReference type="InterPro" id="IPR046884">
    <property type="entry name" value="MnmA-like_central"/>
</dbReference>
<dbReference type="InterPro" id="IPR023382">
    <property type="entry name" value="MnmA-like_central_sf"/>
</dbReference>
<dbReference type="InterPro" id="IPR014729">
    <property type="entry name" value="Rossmann-like_a/b/a_fold"/>
</dbReference>
<dbReference type="NCBIfam" id="NF001138">
    <property type="entry name" value="PRK00143.1"/>
    <property type="match status" value="1"/>
</dbReference>
<dbReference type="NCBIfam" id="TIGR00420">
    <property type="entry name" value="trmU"/>
    <property type="match status" value="1"/>
</dbReference>
<dbReference type="PANTHER" id="PTHR11933:SF5">
    <property type="entry name" value="MITOCHONDRIAL TRNA-SPECIFIC 2-THIOURIDYLASE 1"/>
    <property type="match status" value="1"/>
</dbReference>
<dbReference type="PANTHER" id="PTHR11933">
    <property type="entry name" value="TRNA 5-METHYLAMINOMETHYL-2-THIOURIDYLATE -METHYLTRANSFERASE"/>
    <property type="match status" value="1"/>
</dbReference>
<dbReference type="Pfam" id="PF03054">
    <property type="entry name" value="tRNA_Me_trans"/>
    <property type="match status" value="1"/>
</dbReference>
<dbReference type="Pfam" id="PF20258">
    <property type="entry name" value="tRNA_Me_trans_C"/>
    <property type="match status" value="1"/>
</dbReference>
<dbReference type="Pfam" id="PF20259">
    <property type="entry name" value="tRNA_Me_trans_M"/>
    <property type="match status" value="1"/>
</dbReference>
<dbReference type="SUPFAM" id="SSF52402">
    <property type="entry name" value="Adenine nucleotide alpha hydrolases-like"/>
    <property type="match status" value="1"/>
</dbReference>
<protein>
    <recommendedName>
        <fullName evidence="1">tRNA-specific 2-thiouridylase MnmA</fullName>
        <ecNumber evidence="1">2.8.1.13</ecNumber>
    </recommendedName>
</protein>
<accession>Q9Z8A5</accession>
<accession>Q9JQ72</accession>
<name>MNMA_CHLPN</name>
<sequence>MQQTVIVAMSGGVDSSVVAYLFKKFTNYKVIGLFMKNWEEDSEGGLCSSTKDYEDVERVCLQLDIPYYTVSFAKEYRERVFARFLKEYSLGYTPNPDILCNREIKFDLLQKKVQELGGDYLATGHYCRLNTELQETQLLRGCDPQKDQSYFLSGTPKSALHNVLFPLGEMNKTEVRAIAAQAALPTAEKKDSTGICFIGKRPFKEFLEKFLPNKTGNVIDWDTKEIVGQHQGAHYYTIGQRRGLDLGGSEKPCYVVGKNIEENSIYIVRGEDHPQLYLRELTARELNWFTPPKSGCHCSAKVRYRSPDEACTIDYSSGDEVKVRFSQPVKAVTPGQTIAFYQGDTCLGSGVIDVPMIPSEG</sequence>
<gene>
    <name evidence="1" type="primary">mnmA</name>
    <name type="synonym">trmU</name>
    <name type="ordered locus">CPn_0438</name>
    <name type="ordered locus">CP_0315</name>
    <name type="ordered locus">CpB0453</name>
</gene>
<feature type="chain" id="PRO_0000121624" description="tRNA-specific 2-thiouridylase MnmA">
    <location>
        <begin position="1"/>
        <end position="361"/>
    </location>
</feature>
<feature type="region of interest" description="Interaction with target base in tRNA" evidence="1">
    <location>
        <begin position="95"/>
        <end position="97"/>
    </location>
</feature>
<feature type="region of interest" description="Interaction with tRNA" evidence="1">
    <location>
        <begin position="146"/>
        <end position="148"/>
    </location>
</feature>
<feature type="region of interest" description="Interaction with tRNA" evidence="1">
    <location>
        <begin position="303"/>
        <end position="304"/>
    </location>
</feature>
<feature type="active site" description="Nucleophile" evidence="1">
    <location>
        <position position="100"/>
    </location>
</feature>
<feature type="active site" description="Cysteine persulfide intermediate" evidence="1">
    <location>
        <position position="196"/>
    </location>
</feature>
<feature type="binding site" evidence="1">
    <location>
        <begin position="8"/>
        <end position="15"/>
    </location>
    <ligand>
        <name>ATP</name>
        <dbReference type="ChEBI" id="CHEBI:30616"/>
    </ligand>
</feature>
<feature type="binding site" evidence="1">
    <location>
        <position position="35"/>
    </location>
    <ligand>
        <name>ATP</name>
        <dbReference type="ChEBI" id="CHEBI:30616"/>
    </ligand>
</feature>
<feature type="binding site" evidence="1">
    <location>
        <position position="124"/>
    </location>
    <ligand>
        <name>ATP</name>
        <dbReference type="ChEBI" id="CHEBI:30616"/>
    </ligand>
</feature>
<feature type="site" description="Interaction with tRNA" evidence="1">
    <location>
        <position position="125"/>
    </location>
</feature>
<feature type="site" description="Interaction with tRNA" evidence="1">
    <location>
        <position position="336"/>
    </location>
</feature>
<feature type="disulfide bond" description="Alternate" evidence="1">
    <location>
        <begin position="100"/>
        <end position="196"/>
    </location>
</feature>
<evidence type="ECO:0000255" key="1">
    <source>
        <dbReference type="HAMAP-Rule" id="MF_00144"/>
    </source>
</evidence>
<proteinExistence type="inferred from homology"/>
<comment type="function">
    <text evidence="1">Catalyzes the 2-thiolation of uridine at the wobble position (U34) of tRNA, leading to the formation of s(2)U34.</text>
</comment>
<comment type="catalytic activity">
    <reaction evidence="1">
        <text>S-sulfanyl-L-cysteinyl-[protein] + uridine(34) in tRNA + AH2 + ATP = 2-thiouridine(34) in tRNA + L-cysteinyl-[protein] + A + AMP + diphosphate + H(+)</text>
        <dbReference type="Rhea" id="RHEA:47032"/>
        <dbReference type="Rhea" id="RHEA-COMP:10131"/>
        <dbReference type="Rhea" id="RHEA-COMP:11726"/>
        <dbReference type="Rhea" id="RHEA-COMP:11727"/>
        <dbReference type="Rhea" id="RHEA-COMP:11728"/>
        <dbReference type="ChEBI" id="CHEBI:13193"/>
        <dbReference type="ChEBI" id="CHEBI:15378"/>
        <dbReference type="ChEBI" id="CHEBI:17499"/>
        <dbReference type="ChEBI" id="CHEBI:29950"/>
        <dbReference type="ChEBI" id="CHEBI:30616"/>
        <dbReference type="ChEBI" id="CHEBI:33019"/>
        <dbReference type="ChEBI" id="CHEBI:61963"/>
        <dbReference type="ChEBI" id="CHEBI:65315"/>
        <dbReference type="ChEBI" id="CHEBI:87170"/>
        <dbReference type="ChEBI" id="CHEBI:456215"/>
        <dbReference type="EC" id="2.8.1.13"/>
    </reaction>
</comment>
<comment type="subcellular location">
    <subcellularLocation>
        <location evidence="1">Cytoplasm</location>
    </subcellularLocation>
</comment>
<comment type="similarity">
    <text evidence="1">Belongs to the MnmA/TRMU family.</text>
</comment>